<sequence length="559" mass="62162">MEYDYIIIGAGSAGNVLATRLTEESDVSVLLLEAGGPDYRLDFRTQMPAALAFPLQGKRYNWAYETDPEPHMNNRRMECGRGKGLGGSSLINGMCYIRGNAMDFDNWATMPGLEDWSYLDCLPYFRKAETRDVGSNDYHGATGPVSVATPKMGNNELFHAMVEAGVQAGYPRTDDLNGYQQEGFGPMDRTVTPKGRRASTARGYLDQAKGRKNLTIVTHALTDKILFEGKRAVGVAYFKGESPQTVQARREVLLCAGAIASPQILQRSGVGPKDLLQGLDIPVVHDLPGVGENLQDHLEMYLQYACKEPVSLYPALQWFNQPKIGAEWLFSGTGIGASNQFEAGGFIRSRDEFAWPNIQYHFLPVAINYNGSNAVKEHGFQAHVGSMRSLSRGRVQVRSKDAREHPSILFNYMSTEQDWQEFRDAIRITREIMAQPALDKYRGREISPGLEVQTDEELDEFIRTHAETAFHPSCSCKMGEDEMAVVDGQGRVHGMEGLRVVDASIMPQIITGNLNATTIMIAEKIADRIRRRQPLPRSRARYYVSGNTPVRKAPLKPAS</sequence>
<protein>
    <recommendedName>
        <fullName evidence="1">Oxygen-dependent choline dehydrogenase</fullName>
        <shortName evidence="1">CDH</shortName>
        <shortName evidence="1">CHD</shortName>
        <ecNumber evidence="1">1.1.99.1</ecNumber>
    </recommendedName>
    <alternativeName>
        <fullName evidence="1">Betaine aldehyde dehydrogenase</fullName>
        <shortName evidence="1">BADH</shortName>
        <ecNumber evidence="1">1.2.1.8</ecNumber>
    </alternativeName>
</protein>
<organism>
    <name type="scientific">Pectobacterium carotovorum subsp. carotovorum (strain PC1)</name>
    <dbReference type="NCBI Taxonomy" id="561230"/>
    <lineage>
        <taxon>Bacteria</taxon>
        <taxon>Pseudomonadati</taxon>
        <taxon>Pseudomonadota</taxon>
        <taxon>Gammaproteobacteria</taxon>
        <taxon>Enterobacterales</taxon>
        <taxon>Pectobacteriaceae</taxon>
        <taxon>Pectobacterium</taxon>
    </lineage>
</organism>
<reference key="1">
    <citation type="submission" date="2009-07" db="EMBL/GenBank/DDBJ databases">
        <title>Complete sequence of Pectobacterium carotovorum subsp. carotovorum PC1.</title>
        <authorList>
            <consortium name="US DOE Joint Genome Institute"/>
            <person name="Lucas S."/>
            <person name="Copeland A."/>
            <person name="Lapidus A."/>
            <person name="Glavina del Rio T."/>
            <person name="Tice H."/>
            <person name="Bruce D."/>
            <person name="Goodwin L."/>
            <person name="Pitluck S."/>
            <person name="Munk A.C."/>
            <person name="Brettin T."/>
            <person name="Detter J.C."/>
            <person name="Han C."/>
            <person name="Tapia R."/>
            <person name="Larimer F."/>
            <person name="Land M."/>
            <person name="Hauser L."/>
            <person name="Kyrpides N."/>
            <person name="Mikhailova N."/>
            <person name="Balakrishnan V."/>
            <person name="Glasner J."/>
            <person name="Perna N.T."/>
        </authorList>
    </citation>
    <scope>NUCLEOTIDE SEQUENCE [LARGE SCALE GENOMIC DNA]</scope>
    <source>
        <strain>PC1</strain>
    </source>
</reference>
<feature type="chain" id="PRO_1000212847" description="Oxygen-dependent choline dehydrogenase">
    <location>
        <begin position="1"/>
        <end position="559"/>
    </location>
</feature>
<feature type="region of interest" description="Disordered" evidence="2">
    <location>
        <begin position="182"/>
        <end position="201"/>
    </location>
</feature>
<feature type="active site" description="Proton acceptor" evidence="1">
    <location>
        <position position="471"/>
    </location>
</feature>
<feature type="binding site" evidence="1">
    <location>
        <begin position="4"/>
        <end position="33"/>
    </location>
    <ligand>
        <name>FAD</name>
        <dbReference type="ChEBI" id="CHEBI:57692"/>
    </ligand>
</feature>
<dbReference type="EC" id="1.1.99.1" evidence="1"/>
<dbReference type="EC" id="1.2.1.8" evidence="1"/>
<dbReference type="EMBL" id="CP001657">
    <property type="protein sequence ID" value="ACT13585.1"/>
    <property type="molecule type" value="Genomic_DNA"/>
</dbReference>
<dbReference type="RefSeq" id="WP_015840759.1">
    <property type="nucleotide sequence ID" value="NC_012917.1"/>
</dbReference>
<dbReference type="SMR" id="C6DKY4"/>
<dbReference type="STRING" id="561230.PC1_2554"/>
<dbReference type="KEGG" id="pct:PC1_2554"/>
<dbReference type="eggNOG" id="COG2303">
    <property type="taxonomic scope" value="Bacteria"/>
</dbReference>
<dbReference type="HOGENOM" id="CLU_002865_7_1_6"/>
<dbReference type="OrthoDB" id="9785276at2"/>
<dbReference type="UniPathway" id="UPA00529">
    <property type="reaction ID" value="UER00385"/>
</dbReference>
<dbReference type="Proteomes" id="UP000002736">
    <property type="component" value="Chromosome"/>
</dbReference>
<dbReference type="GO" id="GO:0016020">
    <property type="term" value="C:membrane"/>
    <property type="evidence" value="ECO:0007669"/>
    <property type="project" value="TreeGrafter"/>
</dbReference>
<dbReference type="GO" id="GO:0008802">
    <property type="term" value="F:betaine-aldehyde dehydrogenase (NAD+) activity"/>
    <property type="evidence" value="ECO:0007669"/>
    <property type="project" value="UniProtKB-EC"/>
</dbReference>
<dbReference type="GO" id="GO:0008812">
    <property type="term" value="F:choline dehydrogenase activity"/>
    <property type="evidence" value="ECO:0007669"/>
    <property type="project" value="UniProtKB-UniRule"/>
</dbReference>
<dbReference type="GO" id="GO:0050660">
    <property type="term" value="F:flavin adenine dinucleotide binding"/>
    <property type="evidence" value="ECO:0007669"/>
    <property type="project" value="InterPro"/>
</dbReference>
<dbReference type="GO" id="GO:0019285">
    <property type="term" value="P:glycine betaine biosynthetic process from choline"/>
    <property type="evidence" value="ECO:0007669"/>
    <property type="project" value="UniProtKB-UniRule"/>
</dbReference>
<dbReference type="Gene3D" id="3.50.50.60">
    <property type="entry name" value="FAD/NAD(P)-binding domain"/>
    <property type="match status" value="1"/>
</dbReference>
<dbReference type="Gene3D" id="3.30.560.10">
    <property type="entry name" value="Glucose Oxidase, domain 3"/>
    <property type="match status" value="1"/>
</dbReference>
<dbReference type="HAMAP" id="MF_00750">
    <property type="entry name" value="Choline_dehydrogen"/>
    <property type="match status" value="1"/>
</dbReference>
<dbReference type="InterPro" id="IPR011533">
    <property type="entry name" value="BetA"/>
</dbReference>
<dbReference type="InterPro" id="IPR036188">
    <property type="entry name" value="FAD/NAD-bd_sf"/>
</dbReference>
<dbReference type="InterPro" id="IPR012132">
    <property type="entry name" value="GMC_OxRdtase"/>
</dbReference>
<dbReference type="InterPro" id="IPR000172">
    <property type="entry name" value="GMC_OxRdtase_N"/>
</dbReference>
<dbReference type="InterPro" id="IPR007867">
    <property type="entry name" value="GMC_OxRtase_C"/>
</dbReference>
<dbReference type="NCBIfam" id="TIGR01810">
    <property type="entry name" value="betA"/>
    <property type="match status" value="1"/>
</dbReference>
<dbReference type="NCBIfam" id="NF002550">
    <property type="entry name" value="PRK02106.1"/>
    <property type="match status" value="1"/>
</dbReference>
<dbReference type="PANTHER" id="PTHR11552:SF147">
    <property type="entry name" value="CHOLINE DEHYDROGENASE, MITOCHONDRIAL"/>
    <property type="match status" value="1"/>
</dbReference>
<dbReference type="PANTHER" id="PTHR11552">
    <property type="entry name" value="GLUCOSE-METHANOL-CHOLINE GMC OXIDOREDUCTASE"/>
    <property type="match status" value="1"/>
</dbReference>
<dbReference type="Pfam" id="PF05199">
    <property type="entry name" value="GMC_oxred_C"/>
    <property type="match status" value="1"/>
</dbReference>
<dbReference type="Pfam" id="PF00732">
    <property type="entry name" value="GMC_oxred_N"/>
    <property type="match status" value="1"/>
</dbReference>
<dbReference type="PIRSF" id="PIRSF000137">
    <property type="entry name" value="Alcohol_oxidase"/>
    <property type="match status" value="1"/>
</dbReference>
<dbReference type="SUPFAM" id="SSF54373">
    <property type="entry name" value="FAD-linked reductases, C-terminal domain"/>
    <property type="match status" value="1"/>
</dbReference>
<dbReference type="SUPFAM" id="SSF51905">
    <property type="entry name" value="FAD/NAD(P)-binding domain"/>
    <property type="match status" value="1"/>
</dbReference>
<dbReference type="PROSITE" id="PS00623">
    <property type="entry name" value="GMC_OXRED_1"/>
    <property type="match status" value="1"/>
</dbReference>
<dbReference type="PROSITE" id="PS00624">
    <property type="entry name" value="GMC_OXRED_2"/>
    <property type="match status" value="1"/>
</dbReference>
<keyword id="KW-0274">FAD</keyword>
<keyword id="KW-0285">Flavoprotein</keyword>
<keyword id="KW-0520">NAD</keyword>
<keyword id="KW-0560">Oxidoreductase</keyword>
<name>BETA_PECCP</name>
<accession>C6DKY4</accession>
<proteinExistence type="inferred from homology"/>
<evidence type="ECO:0000255" key="1">
    <source>
        <dbReference type="HAMAP-Rule" id="MF_00750"/>
    </source>
</evidence>
<evidence type="ECO:0000256" key="2">
    <source>
        <dbReference type="SAM" id="MobiDB-lite"/>
    </source>
</evidence>
<comment type="function">
    <text evidence="1">Involved in the biosynthesis of the osmoprotectant glycine betaine. Catalyzes the oxidation of choline to betaine aldehyde and betaine aldehyde to glycine betaine at the same rate.</text>
</comment>
<comment type="catalytic activity">
    <reaction evidence="1">
        <text>choline + A = betaine aldehyde + AH2</text>
        <dbReference type="Rhea" id="RHEA:17433"/>
        <dbReference type="ChEBI" id="CHEBI:13193"/>
        <dbReference type="ChEBI" id="CHEBI:15354"/>
        <dbReference type="ChEBI" id="CHEBI:15710"/>
        <dbReference type="ChEBI" id="CHEBI:17499"/>
        <dbReference type="EC" id="1.1.99.1"/>
    </reaction>
</comment>
<comment type="catalytic activity">
    <reaction evidence="1">
        <text>betaine aldehyde + NAD(+) + H2O = glycine betaine + NADH + 2 H(+)</text>
        <dbReference type="Rhea" id="RHEA:15305"/>
        <dbReference type="ChEBI" id="CHEBI:15377"/>
        <dbReference type="ChEBI" id="CHEBI:15378"/>
        <dbReference type="ChEBI" id="CHEBI:15710"/>
        <dbReference type="ChEBI" id="CHEBI:17750"/>
        <dbReference type="ChEBI" id="CHEBI:57540"/>
        <dbReference type="ChEBI" id="CHEBI:57945"/>
        <dbReference type="EC" id="1.2.1.8"/>
    </reaction>
</comment>
<comment type="cofactor">
    <cofactor evidence="1">
        <name>FAD</name>
        <dbReference type="ChEBI" id="CHEBI:57692"/>
    </cofactor>
</comment>
<comment type="pathway">
    <text evidence="1">Amine and polyamine biosynthesis; betaine biosynthesis via choline pathway; betaine aldehyde from choline (cytochrome c reductase route): step 1/1.</text>
</comment>
<comment type="similarity">
    <text evidence="1">Belongs to the GMC oxidoreductase family.</text>
</comment>
<gene>
    <name evidence="1" type="primary">betA</name>
    <name type="ordered locus">PC1_2554</name>
</gene>